<evidence type="ECO:0000250" key="1"/>
<evidence type="ECO:0000250" key="2">
    <source>
        <dbReference type="UniProtKB" id="Q40577"/>
    </source>
</evidence>
<evidence type="ECO:0000269" key="3">
    <source>
    </source>
</evidence>
<evidence type="ECO:0000269" key="4">
    <source>
    </source>
</evidence>
<evidence type="ECO:0000305" key="5"/>
<reference key="1">
    <citation type="journal article" date="2002" name="Phytochemistry">
        <title>A cDNA clone for beta-caryophyllene synthase from Artemisia annua.</title>
        <authorList>
            <person name="Cai Y."/>
            <person name="Jia J.W."/>
            <person name="Crock J."/>
            <person name="Lin Z.X."/>
            <person name="Chen X.Y."/>
            <person name="Croteau R."/>
        </authorList>
    </citation>
    <scope>NUCLEOTIDE SEQUENCE [MRNA]</scope>
    <scope>FUNCTION</scope>
    <scope>CATALYTIC ACTIVITY</scope>
    <scope>BIOPHYSICOCHEMICAL PROPERTIES</scope>
    <scope>SUBUNIT</scope>
    <scope>TISSUE SPECIFICITY</scope>
    <scope>DEVELOPMENTAL STAGE</scope>
    <scope>INDUCTION BY WOUNDING AND ELICITORS</scope>
</reference>
<reference key="2">
    <citation type="journal article" date="2011" name="BMC Plant Biol.">
        <title>Relative expression of genes of terpene metabolism in different tissues of Artemisia annua L.</title>
        <authorList>
            <person name="Olofsson L."/>
            <person name="Engstroem A."/>
            <person name="Lundgren A."/>
            <person name="Brodelius P.E."/>
        </authorList>
    </citation>
    <scope>TISSUE SPECIFICITY</scope>
</reference>
<feature type="chain" id="PRO_0000412110" description="Beta-caryophyllene synthase">
    <location>
        <begin position="1"/>
        <end position="548"/>
    </location>
</feature>
<feature type="short sequence motif" description="DDXXD motif">
    <location>
        <begin position="301"/>
        <end position="305"/>
    </location>
</feature>
<feature type="binding site" evidence="2">
    <location>
        <position position="301"/>
    </location>
    <ligand>
        <name>Mg(2+)</name>
        <dbReference type="ChEBI" id="CHEBI:18420"/>
        <label>1</label>
    </ligand>
</feature>
<feature type="binding site" evidence="2">
    <location>
        <position position="301"/>
    </location>
    <ligand>
        <name>Mg(2+)</name>
        <dbReference type="ChEBI" id="CHEBI:18420"/>
        <label>2</label>
    </ligand>
</feature>
<feature type="binding site" evidence="2">
    <location>
        <position position="305"/>
    </location>
    <ligand>
        <name>Mg(2+)</name>
        <dbReference type="ChEBI" id="CHEBI:18420"/>
        <label>1</label>
    </ligand>
</feature>
<feature type="binding site" evidence="2">
    <location>
        <position position="305"/>
    </location>
    <ligand>
        <name>Mg(2+)</name>
        <dbReference type="ChEBI" id="CHEBI:18420"/>
        <label>2</label>
    </ligand>
</feature>
<feature type="binding site" evidence="2">
    <location>
        <position position="445"/>
    </location>
    <ligand>
        <name>Mg(2+)</name>
        <dbReference type="ChEBI" id="CHEBI:18420"/>
        <label>3</label>
    </ligand>
</feature>
<feature type="binding site" evidence="2">
    <location>
        <position position="449"/>
    </location>
    <ligand>
        <name>Mg(2+)</name>
        <dbReference type="ChEBI" id="CHEBI:18420"/>
        <label>3</label>
    </ligand>
</feature>
<feature type="binding site" evidence="2">
    <location>
        <position position="453"/>
    </location>
    <ligand>
        <name>Mg(2+)</name>
        <dbReference type="ChEBI" id="CHEBI:18420"/>
        <label>3</label>
    </ligand>
</feature>
<name>CARS_ARTAN</name>
<gene>
    <name type="primary">QHS1</name>
</gene>
<dbReference type="EC" id="4.2.3.57"/>
<dbReference type="EMBL" id="AF472361">
    <property type="protein sequence ID" value="AAL79181.1"/>
    <property type="molecule type" value="mRNA"/>
</dbReference>
<dbReference type="SMR" id="Q8SA63"/>
<dbReference type="KEGG" id="ag:AAL79181"/>
<dbReference type="BioCyc" id="MetaCyc:MONOMER-14912"/>
<dbReference type="BRENDA" id="4.2.3.57">
    <property type="organism ID" value="7150"/>
</dbReference>
<dbReference type="GO" id="GO:0080016">
    <property type="term" value="F:(-)-E-beta-caryophyllene synthase activity"/>
    <property type="evidence" value="ECO:0000314"/>
    <property type="project" value="UniProtKB"/>
</dbReference>
<dbReference type="GO" id="GO:0000287">
    <property type="term" value="F:magnesium ion binding"/>
    <property type="evidence" value="ECO:0007669"/>
    <property type="project" value="InterPro"/>
</dbReference>
<dbReference type="GO" id="GO:0016102">
    <property type="term" value="P:diterpenoid biosynthetic process"/>
    <property type="evidence" value="ECO:0007669"/>
    <property type="project" value="InterPro"/>
</dbReference>
<dbReference type="GO" id="GO:0051762">
    <property type="term" value="P:sesquiterpene biosynthetic process"/>
    <property type="evidence" value="ECO:0000314"/>
    <property type="project" value="UniProtKB"/>
</dbReference>
<dbReference type="CDD" id="cd00684">
    <property type="entry name" value="Terpene_cyclase_plant_C1"/>
    <property type="match status" value="1"/>
</dbReference>
<dbReference type="FunFam" id="1.10.600.10:FF:000007">
    <property type="entry name" value="Isoprene synthase, chloroplastic"/>
    <property type="match status" value="1"/>
</dbReference>
<dbReference type="FunFam" id="1.50.10.130:FF:000001">
    <property type="entry name" value="Isoprene synthase, chloroplastic"/>
    <property type="match status" value="1"/>
</dbReference>
<dbReference type="Gene3D" id="1.10.600.10">
    <property type="entry name" value="Farnesyl Diphosphate Synthase"/>
    <property type="match status" value="1"/>
</dbReference>
<dbReference type="Gene3D" id="1.50.10.130">
    <property type="entry name" value="Terpene synthase, N-terminal domain"/>
    <property type="match status" value="1"/>
</dbReference>
<dbReference type="InterPro" id="IPR008949">
    <property type="entry name" value="Isoprenoid_synthase_dom_sf"/>
</dbReference>
<dbReference type="InterPro" id="IPR034741">
    <property type="entry name" value="Terpene_cyclase-like_1_C"/>
</dbReference>
<dbReference type="InterPro" id="IPR044814">
    <property type="entry name" value="Terpene_cyclase_plant_C1"/>
</dbReference>
<dbReference type="InterPro" id="IPR001906">
    <property type="entry name" value="Terpene_synth_N"/>
</dbReference>
<dbReference type="InterPro" id="IPR036965">
    <property type="entry name" value="Terpene_synth_N_sf"/>
</dbReference>
<dbReference type="InterPro" id="IPR050148">
    <property type="entry name" value="Terpene_synthase-like"/>
</dbReference>
<dbReference type="InterPro" id="IPR005630">
    <property type="entry name" value="Terpene_synthase_metal-bd"/>
</dbReference>
<dbReference type="InterPro" id="IPR008930">
    <property type="entry name" value="Terpenoid_cyclase/PrenylTrfase"/>
</dbReference>
<dbReference type="PANTHER" id="PTHR31225">
    <property type="entry name" value="OS04G0344100 PROTEIN-RELATED"/>
    <property type="match status" value="1"/>
</dbReference>
<dbReference type="PANTHER" id="PTHR31225:SF196">
    <property type="entry name" value="TERPENOID CYCLASES_PROTEIN PRENYLTRANSFERASE ALPHA-ALPHA TOROID-RELATED"/>
    <property type="match status" value="1"/>
</dbReference>
<dbReference type="Pfam" id="PF01397">
    <property type="entry name" value="Terpene_synth"/>
    <property type="match status" value="1"/>
</dbReference>
<dbReference type="Pfam" id="PF03936">
    <property type="entry name" value="Terpene_synth_C"/>
    <property type="match status" value="1"/>
</dbReference>
<dbReference type="SFLD" id="SFLDS00005">
    <property type="entry name" value="Isoprenoid_Synthase_Type_I"/>
    <property type="match status" value="1"/>
</dbReference>
<dbReference type="SFLD" id="SFLDG01019">
    <property type="entry name" value="Terpene_Cyclase_Like_1_C_Termi"/>
    <property type="match status" value="1"/>
</dbReference>
<dbReference type="SUPFAM" id="SSF48239">
    <property type="entry name" value="Terpenoid cyclases/Protein prenyltransferases"/>
    <property type="match status" value="1"/>
</dbReference>
<dbReference type="SUPFAM" id="SSF48576">
    <property type="entry name" value="Terpenoid synthases"/>
    <property type="match status" value="1"/>
</dbReference>
<protein>
    <recommendedName>
        <fullName>Beta-caryophyllene synthase</fullName>
        <ecNumber>4.2.3.57</ecNumber>
    </recommendedName>
</protein>
<accession>Q8SA63</accession>
<keyword id="KW-0456">Lyase</keyword>
<keyword id="KW-0460">Magnesium</keyword>
<keyword id="KW-0464">Manganese</keyword>
<keyword id="KW-0479">Metal-binding</keyword>
<sequence length="548" mass="63737">MSVKEEKVIRPIVHFPPSVWADQFLIFDDKQAEQANVEQVVNELREDVRKDLVSSLDVQTEHTNLLKLIDAIQRLGIAYHFEEEIEQALQHIYDTYGDDWKGRSPSLWFRILRQQGFYVSCDIFKNYKKEDGSFKESLTNDVEGLLELYEATYLRVQGEGVLDDALVFTRTCLEKIAKDLVHTNPTLSTYIQEALKQPLHKRLTRLEALRYIPMYEQQASHNESLLKLAKLGFNLLQSLHRKELSEVSRWWKGLDVPNNLPYARDRMVECYFWALGVYFEPKYSQARIFLAKVISLATVLDDTYDAYGTYEELKIFTEAIQRWSITCIDMLPEYLKLLYQGVLDIYIEMEEIMGKEGKAHHLSYAKESMKEFIRSYMMEAKWANEGYVPTAEEHMSVAFVSSGYSMLATTCFVGMGDIVTDEAFKWALTKPPIIKASCAIARLMDDIHSQKEEKERIHVASSVESYMKQYDVTEEHVLKVFNKKIEDAWKDITRESLVRKDIPMPLMMRVINLAQVMDVLYKHKDGFTNVGEELKDHIKSLLVHPIPI</sequence>
<comment type="function">
    <text evidence="3">Sesquiterpene synthase involved in the biosynthesis of beta-caryophyllene, a sesquiterpene with anti-inflammatory and anti-carcinogenic activities. Can use farnesyl diphosphate and (+)-chrysanthemyl diphosphate as substrates, but not geranylgeranyl diphosphate. Produces two irregular monoterpenes, yomogi alcohol and artemisia alcohol from (+)-chrysanthemyl diphosphate. Limited activity with geranyl diphosphate, leading to the production of limonene, terpinolene, beta-pinene, gamma-terpinene, alpha-terpinene and other minor products.</text>
</comment>
<comment type="catalytic activity">
    <reaction evidence="3">
        <text>(2E,6E)-farnesyl diphosphate = (-)-(E)-beta-caryophyllene + diphosphate</text>
        <dbReference type="Rhea" id="RHEA:28294"/>
        <dbReference type="ChEBI" id="CHEBI:10357"/>
        <dbReference type="ChEBI" id="CHEBI:33019"/>
        <dbReference type="ChEBI" id="CHEBI:175763"/>
        <dbReference type="EC" id="4.2.3.57"/>
    </reaction>
</comment>
<comment type="cofactor">
    <cofactor evidence="1">
        <name>Mg(2+)</name>
        <dbReference type="ChEBI" id="CHEBI:18420"/>
    </cofactor>
    <cofactor evidence="1">
        <name>Mn(2+)</name>
        <dbReference type="ChEBI" id="CHEBI:29035"/>
    </cofactor>
    <text evidence="1">Binds 3 Mg(2+) or Mn(2+) ions per subunit.</text>
</comment>
<comment type="biophysicochemical properties">
    <kinetics>
        <KM evidence="3">1.8 uM for (2E,6E)-farnesyl diphosphate</KM>
    </kinetics>
    <phDependence>
        <text evidence="3">Optimum pH is 7.7.</text>
    </phDependence>
</comment>
<comment type="subunit">
    <text evidence="3">Monomer.</text>
</comment>
<comment type="tissue specificity">
    <text evidence="3 4">Highly expressed in stem epidermis, cortex and stele. Detected in leaves, petioles and inflorescences, but not in roots.</text>
</comment>
<comment type="developmental stage">
    <text evidence="3">Expression decreases with the age of the seedlings.</text>
</comment>
<comment type="induction">
    <text evidence="3">Up-regulated by wounding and by elicitor treatment.</text>
</comment>
<comment type="domain">
    <text>The Asp-Asp-Xaa-Xaa-Asp/Glu (DDXXD/E) motif is important for the catalytic activity, presumably through binding to Mg(2+).</text>
</comment>
<comment type="similarity">
    <text evidence="5">Belongs to the terpene synthase family. Tpsa subfamily.</text>
</comment>
<proteinExistence type="evidence at protein level"/>
<organism>
    <name type="scientific">Artemisia annua</name>
    <name type="common">Sweet wormwood</name>
    <dbReference type="NCBI Taxonomy" id="35608"/>
    <lineage>
        <taxon>Eukaryota</taxon>
        <taxon>Viridiplantae</taxon>
        <taxon>Streptophyta</taxon>
        <taxon>Embryophyta</taxon>
        <taxon>Tracheophyta</taxon>
        <taxon>Spermatophyta</taxon>
        <taxon>Magnoliopsida</taxon>
        <taxon>eudicotyledons</taxon>
        <taxon>Gunneridae</taxon>
        <taxon>Pentapetalae</taxon>
        <taxon>asterids</taxon>
        <taxon>campanulids</taxon>
        <taxon>Asterales</taxon>
        <taxon>Asteraceae</taxon>
        <taxon>Asteroideae</taxon>
        <taxon>Anthemideae</taxon>
        <taxon>Artemisiinae</taxon>
        <taxon>Artemisia</taxon>
    </lineage>
</organism>